<gene>
    <name type="primary">cotH</name>
    <name type="synonym">ywrH</name>
    <name type="ordered locus">BSU36060</name>
</gene>
<protein>
    <recommendedName>
        <fullName>Inner spore coat protein H</fullName>
    </recommendedName>
</protein>
<name>COTH_BACSU</name>
<evidence type="ECO:0000269" key="1">
    <source>
    </source>
</evidence>
<evidence type="ECO:0000269" key="2">
    <source>
    </source>
</evidence>
<evidence type="ECO:0000269" key="3">
    <source>
    </source>
</evidence>
<evidence type="ECO:0000269" key="4">
    <source>
    </source>
</evidence>
<evidence type="ECO:0000269" key="5">
    <source>
    </source>
</evidence>
<evidence type="ECO:0000305" key="6"/>
<reference key="1">
    <citation type="journal article" date="1996" name="J. Bacteriol.">
        <title>Bacillus subtilis spore coat assembly requires cotH gene expression.</title>
        <authorList>
            <person name="Naclerio G."/>
            <person name="Baccigalupi L."/>
            <person name="Zilhao R."/>
            <person name="de Felice M."/>
            <person name="Ricca E."/>
        </authorList>
    </citation>
    <scope>NUCLEOTIDE SEQUENCE [GENOMIC DNA]</scope>
    <scope>FUNCTION</scope>
    <scope>SUBCELLULAR LOCATION</scope>
    <source>
        <strain>168 / PY17</strain>
    </source>
</reference>
<reference key="2">
    <citation type="journal article" date="1996" name="J. Bacteriol.">
        <authorList>
            <person name="Naclerio G."/>
            <person name="Baccigalupi L."/>
            <person name="Zilhao R."/>
            <person name="de Felice M."/>
            <person name="Ricca E."/>
        </authorList>
    </citation>
    <scope>ERRATUM OF PUBMED:8755863</scope>
</reference>
<reference key="3">
    <citation type="journal article" date="1997" name="Microbiology">
        <title>The Bacillus subtilis genome from gerBC (311 degrees) to licR (334 degrees).</title>
        <authorList>
            <person name="Presecan E."/>
            <person name="Moszer I."/>
            <person name="Boursier L."/>
            <person name="Cruz Ramos H."/>
            <person name="De La Fuente V."/>
            <person name="Hullo M.-F."/>
            <person name="Lelong C."/>
            <person name="Schleich S."/>
            <person name="Sekowska A."/>
            <person name="Song B.H."/>
            <person name="Villani G."/>
            <person name="Kunst F."/>
            <person name="Danchin A."/>
            <person name="Glaser P."/>
        </authorList>
    </citation>
    <scope>NUCLEOTIDE SEQUENCE [GENOMIC DNA]</scope>
    <source>
        <strain>168</strain>
    </source>
</reference>
<reference key="4">
    <citation type="journal article" date="1997" name="Nature">
        <title>The complete genome sequence of the Gram-positive bacterium Bacillus subtilis.</title>
        <authorList>
            <person name="Kunst F."/>
            <person name="Ogasawara N."/>
            <person name="Moszer I."/>
            <person name="Albertini A.M."/>
            <person name="Alloni G."/>
            <person name="Azevedo V."/>
            <person name="Bertero M.G."/>
            <person name="Bessieres P."/>
            <person name="Bolotin A."/>
            <person name="Borchert S."/>
            <person name="Borriss R."/>
            <person name="Boursier L."/>
            <person name="Brans A."/>
            <person name="Braun M."/>
            <person name="Brignell S.C."/>
            <person name="Bron S."/>
            <person name="Brouillet S."/>
            <person name="Bruschi C.V."/>
            <person name="Caldwell B."/>
            <person name="Capuano V."/>
            <person name="Carter N.M."/>
            <person name="Choi S.-K."/>
            <person name="Codani J.-J."/>
            <person name="Connerton I.F."/>
            <person name="Cummings N.J."/>
            <person name="Daniel R.A."/>
            <person name="Denizot F."/>
            <person name="Devine K.M."/>
            <person name="Duesterhoeft A."/>
            <person name="Ehrlich S.D."/>
            <person name="Emmerson P.T."/>
            <person name="Entian K.-D."/>
            <person name="Errington J."/>
            <person name="Fabret C."/>
            <person name="Ferrari E."/>
            <person name="Foulger D."/>
            <person name="Fritz C."/>
            <person name="Fujita M."/>
            <person name="Fujita Y."/>
            <person name="Fuma S."/>
            <person name="Galizzi A."/>
            <person name="Galleron N."/>
            <person name="Ghim S.-Y."/>
            <person name="Glaser P."/>
            <person name="Goffeau A."/>
            <person name="Golightly E.J."/>
            <person name="Grandi G."/>
            <person name="Guiseppi G."/>
            <person name="Guy B.J."/>
            <person name="Haga K."/>
            <person name="Haiech J."/>
            <person name="Harwood C.R."/>
            <person name="Henaut A."/>
            <person name="Hilbert H."/>
            <person name="Holsappel S."/>
            <person name="Hosono S."/>
            <person name="Hullo M.-F."/>
            <person name="Itaya M."/>
            <person name="Jones L.-M."/>
            <person name="Joris B."/>
            <person name="Karamata D."/>
            <person name="Kasahara Y."/>
            <person name="Klaerr-Blanchard M."/>
            <person name="Klein C."/>
            <person name="Kobayashi Y."/>
            <person name="Koetter P."/>
            <person name="Koningstein G."/>
            <person name="Krogh S."/>
            <person name="Kumano M."/>
            <person name="Kurita K."/>
            <person name="Lapidus A."/>
            <person name="Lardinois S."/>
            <person name="Lauber J."/>
            <person name="Lazarevic V."/>
            <person name="Lee S.-M."/>
            <person name="Levine A."/>
            <person name="Liu H."/>
            <person name="Masuda S."/>
            <person name="Mauel C."/>
            <person name="Medigue C."/>
            <person name="Medina N."/>
            <person name="Mellado R.P."/>
            <person name="Mizuno M."/>
            <person name="Moestl D."/>
            <person name="Nakai S."/>
            <person name="Noback M."/>
            <person name="Noone D."/>
            <person name="O'Reilly M."/>
            <person name="Ogawa K."/>
            <person name="Ogiwara A."/>
            <person name="Oudega B."/>
            <person name="Park S.-H."/>
            <person name="Parro V."/>
            <person name="Pohl T.M."/>
            <person name="Portetelle D."/>
            <person name="Porwollik S."/>
            <person name="Prescott A.M."/>
            <person name="Presecan E."/>
            <person name="Pujic P."/>
            <person name="Purnelle B."/>
            <person name="Rapoport G."/>
            <person name="Rey M."/>
            <person name="Reynolds S."/>
            <person name="Rieger M."/>
            <person name="Rivolta C."/>
            <person name="Rocha E."/>
            <person name="Roche B."/>
            <person name="Rose M."/>
            <person name="Sadaie Y."/>
            <person name="Sato T."/>
            <person name="Scanlan E."/>
            <person name="Schleich S."/>
            <person name="Schroeter R."/>
            <person name="Scoffone F."/>
            <person name="Sekiguchi J."/>
            <person name="Sekowska A."/>
            <person name="Seror S.J."/>
            <person name="Serror P."/>
            <person name="Shin B.-S."/>
            <person name="Soldo B."/>
            <person name="Sorokin A."/>
            <person name="Tacconi E."/>
            <person name="Takagi T."/>
            <person name="Takahashi H."/>
            <person name="Takemaru K."/>
            <person name="Takeuchi M."/>
            <person name="Tamakoshi A."/>
            <person name="Tanaka T."/>
            <person name="Terpstra P."/>
            <person name="Tognoni A."/>
            <person name="Tosato V."/>
            <person name="Uchiyama S."/>
            <person name="Vandenbol M."/>
            <person name="Vannier F."/>
            <person name="Vassarotti A."/>
            <person name="Viari A."/>
            <person name="Wambutt R."/>
            <person name="Wedler E."/>
            <person name="Wedler H."/>
            <person name="Weitzenegger T."/>
            <person name="Winters P."/>
            <person name="Wipat A."/>
            <person name="Yamamoto H."/>
            <person name="Yamane K."/>
            <person name="Yasumoto K."/>
            <person name="Yata K."/>
            <person name="Yoshida K."/>
            <person name="Yoshikawa H.-F."/>
            <person name="Zumstein E."/>
            <person name="Yoshikawa H."/>
            <person name="Danchin A."/>
        </authorList>
    </citation>
    <scope>NUCLEOTIDE SEQUENCE [LARGE SCALE GENOMIC DNA]</scope>
    <source>
        <strain>168</strain>
    </source>
</reference>
<reference key="5">
    <citation type="journal article" date="1995" name="J. Bacteriol.">
        <title>An additional GerE-controlled gene encoding an abundant spore coat protein from Bacillus subtilis.</title>
        <authorList>
            <person name="Sacco M."/>
            <person name="Ricca E."/>
            <person name="Losick R."/>
            <person name="Cutting S.M."/>
        </authorList>
    </citation>
    <scope>NUCLEOTIDE SEQUENCE [GENOMIC DNA] OF 1-34</scope>
    <source>
        <strain>168 / PY79</strain>
    </source>
</reference>
<reference key="6">
    <citation type="journal article" date="1999" name="J. Bacteriol.">
        <title>Assembly requirements and role of CotH during spore coat formation in Bacillus subtilis.</title>
        <authorList>
            <person name="Zilhao R."/>
            <person name="Naclerio G."/>
            <person name="Henriques A.O."/>
            <person name="Baccigalupi L."/>
            <person name="Moran C.P. Jr."/>
            <person name="Ricca E."/>
        </authorList>
    </citation>
    <scope>CHARACTERIZATION</scope>
</reference>
<reference key="7">
    <citation type="journal article" date="2004" name="J. Bacteriol.">
        <title>Interactions among CotB, CotG, and CotH during assembly of the Bacillus subtilis spore coat.</title>
        <authorList>
            <person name="Zilhao R."/>
            <person name="Serrano M."/>
            <person name="Isticato R."/>
            <person name="Ricca E."/>
            <person name="Moran C.P. Jr."/>
            <person name="Henriques A.O."/>
        </authorList>
    </citation>
    <scope>FUNCTION</scope>
</reference>
<reference key="8">
    <citation type="journal article" date="2004" name="J. Bacteriol.">
        <title>Assembly of multiple CotC forms into the Bacillus subtilis spore coat.</title>
        <authorList>
            <person name="Isticato R."/>
            <person name="Esposito G."/>
            <person name="Zilhao R."/>
            <person name="Nolasco S."/>
            <person name="Cangiano G."/>
            <person name="De Felice M."/>
            <person name="Henriques A.O."/>
            <person name="Ricca E."/>
        </authorList>
    </citation>
    <scope>FUNCTION</scope>
</reference>
<reference key="9">
    <citation type="journal article" date="2004" name="Microbiology">
        <title>GerE-independent expression of cotH leads to CotC accumulation in the mother cell compartment during Bacillus subtilis sporulation.</title>
        <authorList>
            <person name="Baccigalupi L."/>
            <person name="Castaldo G."/>
            <person name="Cangiano G."/>
            <person name="Isticato R."/>
            <person name="Marasco R."/>
            <person name="De Felice M."/>
            <person name="Ricca E."/>
        </authorList>
    </citation>
    <scope>INDUCTION</scope>
    <scope>FUNCTION</scope>
</reference>
<reference key="10">
    <citation type="journal article" date="2008" name="J. Bacteriol.">
        <title>CotC-CotU heterodimerization during assembly of the Bacillus subtilis spore coat.</title>
        <authorList>
            <person name="Isticato R."/>
            <person name="Pelosi A."/>
            <person name="Zilhao R."/>
            <person name="Baccigalupi L."/>
            <person name="Henriques A.O."/>
            <person name="De Felice M."/>
            <person name="Ricca E."/>
        </authorList>
    </citation>
    <scope>FUNCTION</scope>
</reference>
<organism>
    <name type="scientific">Bacillus subtilis (strain 168)</name>
    <dbReference type="NCBI Taxonomy" id="224308"/>
    <lineage>
        <taxon>Bacteria</taxon>
        <taxon>Bacillati</taxon>
        <taxon>Bacillota</taxon>
        <taxon>Bacilli</taxon>
        <taxon>Bacillales</taxon>
        <taxon>Bacillaceae</taxon>
        <taxon>Bacillus</taxon>
    </lineage>
</organism>
<accession>Q45535</accession>
<accession>O05221</accession>
<sequence>MKNQSNLPLYQLFVHPKDLRELKKDIWDDDPVPAVMKVNQKRLDIDIAYRGSHIRDFKKKSYHISFYQPKTFRGAREIHLNAEYKDPSLMRNKLSLDFFSELGTLSPKAEFAFVKMNGKNEGVYLELESVDEYYLAKRKLADGAIFYAVDDDANFSLMSDLERETKTSLELGYEKKTGTEEDDFYLQDMIFKINTVPKAQFKSEVTKHVDVDKYLRWLAGIVFTSNYDGFVHNYALYRSGETGLFEVIPWDYDATWGRDIHGERMAADYVRIQGFNTLTARILDESEFRKSYKRLLEKTLQSLFTIEYMEPKIMAMYERIRPFVLMDPYKKNDIERFDREPDVICEYIKNRSQYLKDHLSIL</sequence>
<dbReference type="EMBL" id="X98342">
    <property type="protein sequence ID" value="CAA66988.1"/>
    <property type="molecule type" value="Genomic_DNA"/>
</dbReference>
<dbReference type="EMBL" id="Z93767">
    <property type="protein sequence ID" value="CAB07793.1"/>
    <property type="molecule type" value="Genomic_DNA"/>
</dbReference>
<dbReference type="EMBL" id="AL009126">
    <property type="protein sequence ID" value="CAB15623.1"/>
    <property type="molecule type" value="Genomic_DNA"/>
</dbReference>
<dbReference type="EMBL" id="U14964">
    <property type="status" value="NOT_ANNOTATED_CDS"/>
    <property type="molecule type" value="Genomic_DNA"/>
</dbReference>
<dbReference type="PIR" id="E69605">
    <property type="entry name" value="E69605"/>
</dbReference>
<dbReference type="RefSeq" id="NP_391487.1">
    <property type="nucleotide sequence ID" value="NC_000964.3"/>
</dbReference>
<dbReference type="RefSeq" id="WP_003227854.1">
    <property type="nucleotide sequence ID" value="NZ_OZ025638.1"/>
</dbReference>
<dbReference type="SMR" id="Q45535"/>
<dbReference type="FunCoup" id="Q45535">
    <property type="interactions" value="17"/>
</dbReference>
<dbReference type="STRING" id="224308.BSU36060"/>
<dbReference type="PaxDb" id="224308-BSU36060"/>
<dbReference type="EnsemblBacteria" id="CAB15623">
    <property type="protein sequence ID" value="CAB15623"/>
    <property type="gene ID" value="BSU_36060"/>
</dbReference>
<dbReference type="GeneID" id="936858"/>
<dbReference type="KEGG" id="bsu:BSU36060"/>
<dbReference type="PATRIC" id="fig|224308.179.peg.3903"/>
<dbReference type="eggNOG" id="COG5337">
    <property type="taxonomic scope" value="Bacteria"/>
</dbReference>
<dbReference type="InParanoid" id="Q45535"/>
<dbReference type="OrthoDB" id="3235126at2"/>
<dbReference type="PhylomeDB" id="Q45535"/>
<dbReference type="BioCyc" id="BSUB:BSU36060-MONOMER"/>
<dbReference type="Proteomes" id="UP000001570">
    <property type="component" value="Chromosome"/>
</dbReference>
<dbReference type="GO" id="GO:0030435">
    <property type="term" value="P:sporulation resulting in formation of a cellular spore"/>
    <property type="evidence" value="ECO:0007669"/>
    <property type="project" value="UniProtKB-KW"/>
</dbReference>
<dbReference type="InterPro" id="IPR014867">
    <property type="entry name" value="Spore_coat_CotH_CotH2/3/7"/>
</dbReference>
<dbReference type="PANTHER" id="PTHR40050">
    <property type="entry name" value="INNER SPORE COAT PROTEIN H"/>
    <property type="match status" value="1"/>
</dbReference>
<dbReference type="PANTHER" id="PTHR40050:SF1">
    <property type="entry name" value="INNER SPORE COAT PROTEIN H"/>
    <property type="match status" value="1"/>
</dbReference>
<dbReference type="Pfam" id="PF08757">
    <property type="entry name" value="CotH"/>
    <property type="match status" value="1"/>
</dbReference>
<feature type="chain" id="PRO_0000079264" description="Inner spore coat protein H">
    <location>
        <begin position="1"/>
        <end position="362"/>
    </location>
</feature>
<feature type="sequence conflict" description="In Ref. 1; CAA66988." evidence="6" ref="1">
    <original>A</original>
    <variation>G</variation>
    <location>
        <position position="75"/>
    </location>
</feature>
<proteinExistence type="evidence at protein level"/>
<comment type="function">
    <text evidence="1 2 3 4 5">Involved in the assembly of several proteins in the inner and outer layer of the spore coat. Stabilizes CotC and CotU in the mother cell compartment of sporulating cells and promotes the assembly of both early and late forms of CotC-related polypeptides on the spore surface.</text>
</comment>
<comment type="subunit">
    <text>Assembly of CotH requires CotE and GerE.</text>
</comment>
<comment type="subcellular location">
    <subcellularLocation>
        <location evidence="5">Spore coat</location>
    </subcellularLocation>
</comment>
<comment type="induction">
    <text evidence="3">Expression is negatively regulated by the transcriptional regulator GerE.</text>
</comment>
<comment type="similarity">
    <text evidence="6">Belongs to the CotH family.</text>
</comment>
<keyword id="KW-1185">Reference proteome</keyword>
<keyword id="KW-0749">Sporulation</keyword>